<feature type="chain" id="PRO_1000059491" description="Cysteine desulfurase IscS">
    <location>
        <begin position="1"/>
        <end position="404"/>
    </location>
</feature>
<feature type="active site" description="Cysteine persulfide intermediate" evidence="1">
    <location>
        <position position="328"/>
    </location>
</feature>
<feature type="binding site" evidence="1">
    <location>
        <begin position="75"/>
        <end position="76"/>
    </location>
    <ligand>
        <name>pyridoxal 5'-phosphate</name>
        <dbReference type="ChEBI" id="CHEBI:597326"/>
    </ligand>
</feature>
<feature type="binding site" evidence="1">
    <location>
        <position position="155"/>
    </location>
    <ligand>
        <name>pyridoxal 5'-phosphate</name>
        <dbReference type="ChEBI" id="CHEBI:597326"/>
    </ligand>
</feature>
<feature type="binding site" evidence="1">
    <location>
        <position position="183"/>
    </location>
    <ligand>
        <name>pyridoxal 5'-phosphate</name>
        <dbReference type="ChEBI" id="CHEBI:597326"/>
    </ligand>
</feature>
<feature type="binding site" evidence="1">
    <location>
        <begin position="203"/>
        <end position="205"/>
    </location>
    <ligand>
        <name>pyridoxal 5'-phosphate</name>
        <dbReference type="ChEBI" id="CHEBI:597326"/>
    </ligand>
</feature>
<feature type="binding site" evidence="1">
    <location>
        <position position="243"/>
    </location>
    <ligand>
        <name>pyridoxal 5'-phosphate</name>
        <dbReference type="ChEBI" id="CHEBI:597326"/>
    </ligand>
</feature>
<feature type="binding site" description="via persulfide group" evidence="1">
    <location>
        <position position="328"/>
    </location>
    <ligand>
        <name>[2Fe-2S] cluster</name>
        <dbReference type="ChEBI" id="CHEBI:190135"/>
        <note>ligand shared with IscU</note>
    </ligand>
</feature>
<feature type="modified residue" description="N6-(pyridoxal phosphate)lysine" evidence="1">
    <location>
        <position position="206"/>
    </location>
</feature>
<accession>A8A336</accession>
<organism>
    <name type="scientific">Escherichia coli O9:H4 (strain HS)</name>
    <dbReference type="NCBI Taxonomy" id="331112"/>
    <lineage>
        <taxon>Bacteria</taxon>
        <taxon>Pseudomonadati</taxon>
        <taxon>Pseudomonadota</taxon>
        <taxon>Gammaproteobacteria</taxon>
        <taxon>Enterobacterales</taxon>
        <taxon>Enterobacteriaceae</taxon>
        <taxon>Escherichia</taxon>
    </lineage>
</organism>
<sequence length="404" mass="45090">MKLPIYLDYSATTPVDPRVAEKMMQFMTMDGTFGNPASRSHRFGWQAEEAVDIARNQIADLVGADPREIVFTSGATESDNLAIKGAANFYQKKGKHIITSKTEHKAVLDTCRQLEREGFEVTYLAPQRNGIIDLKELEAAMRDDTILVSIMHVNNEIGVVQDIAAIGEMCRARGIIYHVDATQSVGKLPIDLSQLKVDLMSFSGHKIYGPKGIGALYVRRKPRVRIEAQMHGGGHERGMRSGTLPVHQIVGMGEAYRIAKEEMATEMERLRGLRNRLWNGIKDIEEVYLNGDLEHGAPNILNVSFNYVEGESLIMALKDLAVSSGSACTSASLEPSYVLRALGLNDELAHSSIRFSLGRFTTEEEIDYTIELVRKSIGRLRDLSPLWEMYKQGVDLNSIEWAHH</sequence>
<name>ISCS_ECOHS</name>
<protein>
    <recommendedName>
        <fullName evidence="1">Cysteine desulfurase IscS</fullName>
        <ecNumber evidence="1">2.8.1.7</ecNumber>
    </recommendedName>
</protein>
<gene>
    <name evidence="1" type="primary">iscS</name>
    <name type="ordered locus">EcHS_A2681</name>
</gene>
<comment type="function">
    <text evidence="1">Master enzyme that delivers sulfur to a number of partners involved in Fe-S cluster assembly, tRNA modification or cofactor biosynthesis. Catalyzes the removal of elemental sulfur and selenium atoms from cysteine and selenocysteine to produce alanine. Functions as a sulfur delivery protein for Fe-S cluster synthesis onto IscU, an Fe-S scaffold assembly protein, as well as other S acceptor proteins. Also functions as a selenium delivery protein in the pathway for the biosynthesis of selenophosphate.</text>
</comment>
<comment type="catalytic activity">
    <reaction evidence="1">
        <text>(sulfur carrier)-H + L-cysteine = (sulfur carrier)-SH + L-alanine</text>
        <dbReference type="Rhea" id="RHEA:43892"/>
        <dbReference type="Rhea" id="RHEA-COMP:14737"/>
        <dbReference type="Rhea" id="RHEA-COMP:14739"/>
        <dbReference type="ChEBI" id="CHEBI:29917"/>
        <dbReference type="ChEBI" id="CHEBI:35235"/>
        <dbReference type="ChEBI" id="CHEBI:57972"/>
        <dbReference type="ChEBI" id="CHEBI:64428"/>
        <dbReference type="EC" id="2.8.1.7"/>
    </reaction>
</comment>
<comment type="cofactor">
    <cofactor evidence="1">
        <name>pyridoxal 5'-phosphate</name>
        <dbReference type="ChEBI" id="CHEBI:597326"/>
    </cofactor>
</comment>
<comment type="pathway">
    <text evidence="1">Cofactor biosynthesis; iron-sulfur cluster biosynthesis.</text>
</comment>
<comment type="subunit">
    <text evidence="1">Homodimer. Forms a heterotetramer with IscU, interacts with other sulfur acceptors.</text>
</comment>
<comment type="subcellular location">
    <subcellularLocation>
        <location evidence="1">Cytoplasm</location>
    </subcellularLocation>
</comment>
<comment type="similarity">
    <text evidence="1">Belongs to the class-V pyridoxal-phosphate-dependent aminotransferase family. NifS/IscS subfamily.</text>
</comment>
<reference key="1">
    <citation type="journal article" date="2008" name="J. Bacteriol.">
        <title>The pangenome structure of Escherichia coli: comparative genomic analysis of E. coli commensal and pathogenic isolates.</title>
        <authorList>
            <person name="Rasko D.A."/>
            <person name="Rosovitz M.J."/>
            <person name="Myers G.S.A."/>
            <person name="Mongodin E.F."/>
            <person name="Fricke W.F."/>
            <person name="Gajer P."/>
            <person name="Crabtree J."/>
            <person name="Sebaihia M."/>
            <person name="Thomson N.R."/>
            <person name="Chaudhuri R."/>
            <person name="Henderson I.R."/>
            <person name="Sperandio V."/>
            <person name="Ravel J."/>
        </authorList>
    </citation>
    <scope>NUCLEOTIDE SEQUENCE [LARGE SCALE GENOMIC DNA]</scope>
    <source>
        <strain>HS</strain>
    </source>
</reference>
<keyword id="KW-0001">2Fe-2S</keyword>
<keyword id="KW-0963">Cytoplasm</keyword>
<keyword id="KW-0408">Iron</keyword>
<keyword id="KW-0411">Iron-sulfur</keyword>
<keyword id="KW-0479">Metal-binding</keyword>
<keyword id="KW-0663">Pyridoxal phosphate</keyword>
<keyword id="KW-0808">Transferase</keyword>
<proteinExistence type="inferred from homology"/>
<evidence type="ECO:0000255" key="1">
    <source>
        <dbReference type="HAMAP-Rule" id="MF_00331"/>
    </source>
</evidence>
<dbReference type="EC" id="2.8.1.7" evidence="1"/>
<dbReference type="EMBL" id="CP000802">
    <property type="protein sequence ID" value="ABV06940.1"/>
    <property type="molecule type" value="Genomic_DNA"/>
</dbReference>
<dbReference type="RefSeq" id="WP_001295373.1">
    <property type="nucleotide sequence ID" value="NC_009800.1"/>
</dbReference>
<dbReference type="BMRB" id="A8A336"/>
<dbReference type="SMR" id="A8A336"/>
<dbReference type="GeneID" id="93774606"/>
<dbReference type="KEGG" id="ecx:EcHS_A2681"/>
<dbReference type="HOGENOM" id="CLU_003433_0_2_6"/>
<dbReference type="UniPathway" id="UPA00266"/>
<dbReference type="GO" id="GO:1990221">
    <property type="term" value="C:L-cysteine desulfurase complex"/>
    <property type="evidence" value="ECO:0007669"/>
    <property type="project" value="UniProtKB-ARBA"/>
</dbReference>
<dbReference type="GO" id="GO:0051537">
    <property type="term" value="F:2 iron, 2 sulfur cluster binding"/>
    <property type="evidence" value="ECO:0007669"/>
    <property type="project" value="UniProtKB-UniRule"/>
</dbReference>
<dbReference type="GO" id="GO:0031071">
    <property type="term" value="F:cysteine desulfurase activity"/>
    <property type="evidence" value="ECO:0007669"/>
    <property type="project" value="UniProtKB-UniRule"/>
</dbReference>
<dbReference type="GO" id="GO:0046872">
    <property type="term" value="F:metal ion binding"/>
    <property type="evidence" value="ECO:0007669"/>
    <property type="project" value="UniProtKB-KW"/>
</dbReference>
<dbReference type="GO" id="GO:0030170">
    <property type="term" value="F:pyridoxal phosphate binding"/>
    <property type="evidence" value="ECO:0007669"/>
    <property type="project" value="UniProtKB-UniRule"/>
</dbReference>
<dbReference type="GO" id="GO:0044571">
    <property type="term" value="P:[2Fe-2S] cluster assembly"/>
    <property type="evidence" value="ECO:0007669"/>
    <property type="project" value="UniProtKB-UniRule"/>
</dbReference>
<dbReference type="FunFam" id="3.40.640.10:FF:000003">
    <property type="entry name" value="Cysteine desulfurase IscS"/>
    <property type="match status" value="1"/>
</dbReference>
<dbReference type="FunFam" id="3.90.1150.10:FF:000002">
    <property type="entry name" value="Cysteine desulfurase IscS"/>
    <property type="match status" value="1"/>
</dbReference>
<dbReference type="Gene3D" id="3.90.1150.10">
    <property type="entry name" value="Aspartate Aminotransferase, domain 1"/>
    <property type="match status" value="1"/>
</dbReference>
<dbReference type="Gene3D" id="3.40.640.10">
    <property type="entry name" value="Type I PLP-dependent aspartate aminotransferase-like (Major domain)"/>
    <property type="match status" value="1"/>
</dbReference>
<dbReference type="HAMAP" id="MF_00331">
    <property type="entry name" value="Cys_desulf_IscS"/>
    <property type="match status" value="1"/>
</dbReference>
<dbReference type="InterPro" id="IPR000192">
    <property type="entry name" value="Aminotrans_V_dom"/>
</dbReference>
<dbReference type="InterPro" id="IPR020578">
    <property type="entry name" value="Aminotrans_V_PyrdxlP_BS"/>
</dbReference>
<dbReference type="InterPro" id="IPR010240">
    <property type="entry name" value="Cys_deSase_IscS"/>
</dbReference>
<dbReference type="InterPro" id="IPR016454">
    <property type="entry name" value="Cysteine_dSase"/>
</dbReference>
<dbReference type="InterPro" id="IPR015424">
    <property type="entry name" value="PyrdxlP-dep_Trfase"/>
</dbReference>
<dbReference type="InterPro" id="IPR015421">
    <property type="entry name" value="PyrdxlP-dep_Trfase_major"/>
</dbReference>
<dbReference type="InterPro" id="IPR015422">
    <property type="entry name" value="PyrdxlP-dep_Trfase_small"/>
</dbReference>
<dbReference type="NCBIfam" id="TIGR02006">
    <property type="entry name" value="IscS"/>
    <property type="match status" value="1"/>
</dbReference>
<dbReference type="NCBIfam" id="NF002806">
    <property type="entry name" value="PRK02948.1"/>
    <property type="match status" value="1"/>
</dbReference>
<dbReference type="NCBIfam" id="NF010611">
    <property type="entry name" value="PRK14012.1"/>
    <property type="match status" value="1"/>
</dbReference>
<dbReference type="PANTHER" id="PTHR11601:SF34">
    <property type="entry name" value="CYSTEINE DESULFURASE"/>
    <property type="match status" value="1"/>
</dbReference>
<dbReference type="PANTHER" id="PTHR11601">
    <property type="entry name" value="CYSTEINE DESULFURYLASE FAMILY MEMBER"/>
    <property type="match status" value="1"/>
</dbReference>
<dbReference type="Pfam" id="PF00266">
    <property type="entry name" value="Aminotran_5"/>
    <property type="match status" value="1"/>
</dbReference>
<dbReference type="PIRSF" id="PIRSF005572">
    <property type="entry name" value="NifS"/>
    <property type="match status" value="1"/>
</dbReference>
<dbReference type="SUPFAM" id="SSF53383">
    <property type="entry name" value="PLP-dependent transferases"/>
    <property type="match status" value="1"/>
</dbReference>
<dbReference type="PROSITE" id="PS00595">
    <property type="entry name" value="AA_TRANSFER_CLASS_5"/>
    <property type="match status" value="1"/>
</dbReference>